<proteinExistence type="inferred from homology"/>
<evidence type="ECO:0000255" key="1">
    <source>
        <dbReference type="HAMAP-Rule" id="MF_00259"/>
    </source>
</evidence>
<accession>B1JNS6</accession>
<dbReference type="EC" id="2.1.2.10" evidence="1"/>
<dbReference type="EMBL" id="CP000950">
    <property type="protein sequence ID" value="ACA67168.1"/>
    <property type="molecule type" value="Genomic_DNA"/>
</dbReference>
<dbReference type="RefSeq" id="WP_012303660.1">
    <property type="nucleotide sequence ID" value="NZ_CP009792.1"/>
</dbReference>
<dbReference type="SMR" id="B1JNS6"/>
<dbReference type="KEGG" id="ypy:YPK_0867"/>
<dbReference type="PATRIC" id="fig|502800.11.peg.1491"/>
<dbReference type="GO" id="GO:0005829">
    <property type="term" value="C:cytosol"/>
    <property type="evidence" value="ECO:0007669"/>
    <property type="project" value="TreeGrafter"/>
</dbReference>
<dbReference type="GO" id="GO:0005960">
    <property type="term" value="C:glycine cleavage complex"/>
    <property type="evidence" value="ECO:0007669"/>
    <property type="project" value="InterPro"/>
</dbReference>
<dbReference type="GO" id="GO:0004047">
    <property type="term" value="F:aminomethyltransferase activity"/>
    <property type="evidence" value="ECO:0007669"/>
    <property type="project" value="UniProtKB-UniRule"/>
</dbReference>
<dbReference type="GO" id="GO:0008483">
    <property type="term" value="F:transaminase activity"/>
    <property type="evidence" value="ECO:0007669"/>
    <property type="project" value="UniProtKB-KW"/>
</dbReference>
<dbReference type="GO" id="GO:0019464">
    <property type="term" value="P:glycine decarboxylation via glycine cleavage system"/>
    <property type="evidence" value="ECO:0007669"/>
    <property type="project" value="UniProtKB-UniRule"/>
</dbReference>
<dbReference type="FunFam" id="2.40.30.110:FF:000001">
    <property type="entry name" value="Aminomethyltransferase"/>
    <property type="match status" value="1"/>
</dbReference>
<dbReference type="FunFam" id="3.30.70.1400:FF:000001">
    <property type="entry name" value="Aminomethyltransferase"/>
    <property type="match status" value="1"/>
</dbReference>
<dbReference type="FunFam" id="4.10.1250.10:FF:000001">
    <property type="entry name" value="Aminomethyltransferase"/>
    <property type="match status" value="1"/>
</dbReference>
<dbReference type="Gene3D" id="2.40.30.110">
    <property type="entry name" value="Aminomethyltransferase beta-barrel domains"/>
    <property type="match status" value="1"/>
</dbReference>
<dbReference type="Gene3D" id="3.30.70.1400">
    <property type="entry name" value="Aminomethyltransferase beta-barrel domains"/>
    <property type="match status" value="1"/>
</dbReference>
<dbReference type="Gene3D" id="4.10.1250.10">
    <property type="entry name" value="Aminomethyltransferase fragment"/>
    <property type="match status" value="1"/>
</dbReference>
<dbReference type="Gene3D" id="3.30.1360.120">
    <property type="entry name" value="Probable tRNA modification gtpase trme, domain 1"/>
    <property type="match status" value="1"/>
</dbReference>
<dbReference type="HAMAP" id="MF_00259">
    <property type="entry name" value="GcvT"/>
    <property type="match status" value="1"/>
</dbReference>
<dbReference type="InterPro" id="IPR006223">
    <property type="entry name" value="GCS_T"/>
</dbReference>
<dbReference type="InterPro" id="IPR022903">
    <property type="entry name" value="GCS_T_bac"/>
</dbReference>
<dbReference type="InterPro" id="IPR013977">
    <property type="entry name" value="GCST_C"/>
</dbReference>
<dbReference type="InterPro" id="IPR006222">
    <property type="entry name" value="GCV_T_N"/>
</dbReference>
<dbReference type="InterPro" id="IPR028896">
    <property type="entry name" value="GcvT/YgfZ/DmdA"/>
</dbReference>
<dbReference type="InterPro" id="IPR029043">
    <property type="entry name" value="GcvT/YgfZ_C"/>
</dbReference>
<dbReference type="InterPro" id="IPR027266">
    <property type="entry name" value="TrmE/GcvT_dom1"/>
</dbReference>
<dbReference type="NCBIfam" id="TIGR00528">
    <property type="entry name" value="gcvT"/>
    <property type="match status" value="1"/>
</dbReference>
<dbReference type="NCBIfam" id="NF001567">
    <property type="entry name" value="PRK00389.1"/>
    <property type="match status" value="1"/>
</dbReference>
<dbReference type="PANTHER" id="PTHR43757">
    <property type="entry name" value="AMINOMETHYLTRANSFERASE"/>
    <property type="match status" value="1"/>
</dbReference>
<dbReference type="PANTHER" id="PTHR43757:SF2">
    <property type="entry name" value="AMINOMETHYLTRANSFERASE, MITOCHONDRIAL"/>
    <property type="match status" value="1"/>
</dbReference>
<dbReference type="Pfam" id="PF01571">
    <property type="entry name" value="GCV_T"/>
    <property type="match status" value="1"/>
</dbReference>
<dbReference type="Pfam" id="PF08669">
    <property type="entry name" value="GCV_T_C"/>
    <property type="match status" value="1"/>
</dbReference>
<dbReference type="PIRSF" id="PIRSF006487">
    <property type="entry name" value="GcvT"/>
    <property type="match status" value="1"/>
</dbReference>
<dbReference type="SUPFAM" id="SSF101790">
    <property type="entry name" value="Aminomethyltransferase beta-barrel domain"/>
    <property type="match status" value="1"/>
</dbReference>
<dbReference type="SUPFAM" id="SSF103025">
    <property type="entry name" value="Folate-binding domain"/>
    <property type="match status" value="1"/>
</dbReference>
<comment type="function">
    <text evidence="1">The glycine cleavage system catalyzes the degradation of glycine.</text>
</comment>
<comment type="catalytic activity">
    <reaction evidence="1">
        <text>N(6)-[(R)-S(8)-aminomethyldihydrolipoyl]-L-lysyl-[protein] + (6S)-5,6,7,8-tetrahydrofolate = N(6)-[(R)-dihydrolipoyl]-L-lysyl-[protein] + (6R)-5,10-methylene-5,6,7,8-tetrahydrofolate + NH4(+)</text>
        <dbReference type="Rhea" id="RHEA:16945"/>
        <dbReference type="Rhea" id="RHEA-COMP:10475"/>
        <dbReference type="Rhea" id="RHEA-COMP:10492"/>
        <dbReference type="ChEBI" id="CHEBI:15636"/>
        <dbReference type="ChEBI" id="CHEBI:28938"/>
        <dbReference type="ChEBI" id="CHEBI:57453"/>
        <dbReference type="ChEBI" id="CHEBI:83100"/>
        <dbReference type="ChEBI" id="CHEBI:83143"/>
        <dbReference type="EC" id="2.1.2.10"/>
    </reaction>
</comment>
<comment type="subunit">
    <text evidence="1">The glycine cleavage system is composed of four proteins: P, T, L and H.</text>
</comment>
<comment type="similarity">
    <text evidence="1">Belongs to the GcvT family.</text>
</comment>
<organism>
    <name type="scientific">Yersinia pseudotuberculosis serotype O:3 (strain YPIII)</name>
    <dbReference type="NCBI Taxonomy" id="502800"/>
    <lineage>
        <taxon>Bacteria</taxon>
        <taxon>Pseudomonadati</taxon>
        <taxon>Pseudomonadota</taxon>
        <taxon>Gammaproteobacteria</taxon>
        <taxon>Enterobacterales</taxon>
        <taxon>Yersiniaceae</taxon>
        <taxon>Yersinia</taxon>
    </lineage>
</organism>
<feature type="chain" id="PRO_1000114130" description="Aminomethyltransferase">
    <location>
        <begin position="1"/>
        <end position="365"/>
    </location>
</feature>
<sequence length="365" mass="40352">MAKQTPLYDQHVACGARMVDFHGWMMPLHYGSQIDEHHFVRQDAGMFDVSHMTIVDLHGNRTREFLRYLLANDVAKLTQPGKALYTGMLNESGGVIDDLIVYFLSEDYFRLVVNSATRDKDLAWISQHAEPYQVEVTVRDDLALIAVQGPQAQQKVATLLTTEQQQAIAGMKPFFGIQTGDLFIATTGYTGEAGYEIALPKQQVVAFWQQLLAAGVKPAGLGARDTLRLEAGMNLYGQEMDEKTSPLAANMGWTVAWQPEDRQFIGRAALERQRMKGTEQLVGLIMTEKGVLRNELPVYFFDAAGNQHVGVITSGSFSPTLGFSIALARVPTGIGEHAVVQIRNREMPVRVTKPGFVRAGKAIVL</sequence>
<protein>
    <recommendedName>
        <fullName evidence="1">Aminomethyltransferase</fullName>
        <ecNumber evidence="1">2.1.2.10</ecNumber>
    </recommendedName>
    <alternativeName>
        <fullName evidence="1">Glycine cleavage system T protein</fullName>
    </alternativeName>
</protein>
<gene>
    <name evidence="1" type="primary">gcvT</name>
    <name type="ordered locus">YPK_0867</name>
</gene>
<reference key="1">
    <citation type="submission" date="2008-02" db="EMBL/GenBank/DDBJ databases">
        <title>Complete sequence of Yersinia pseudotuberculosis YPIII.</title>
        <authorList>
            <consortium name="US DOE Joint Genome Institute"/>
            <person name="Copeland A."/>
            <person name="Lucas S."/>
            <person name="Lapidus A."/>
            <person name="Glavina del Rio T."/>
            <person name="Dalin E."/>
            <person name="Tice H."/>
            <person name="Bruce D."/>
            <person name="Goodwin L."/>
            <person name="Pitluck S."/>
            <person name="Munk A.C."/>
            <person name="Brettin T."/>
            <person name="Detter J.C."/>
            <person name="Han C."/>
            <person name="Tapia R."/>
            <person name="Schmutz J."/>
            <person name="Larimer F."/>
            <person name="Land M."/>
            <person name="Hauser L."/>
            <person name="Challacombe J.F."/>
            <person name="Green L."/>
            <person name="Lindler L.E."/>
            <person name="Nikolich M.P."/>
            <person name="Richardson P."/>
        </authorList>
    </citation>
    <scope>NUCLEOTIDE SEQUENCE [LARGE SCALE GENOMIC DNA]</scope>
    <source>
        <strain>YPIII</strain>
    </source>
</reference>
<name>GCST_YERPY</name>
<keyword id="KW-0032">Aminotransferase</keyword>
<keyword id="KW-0808">Transferase</keyword>